<gene>
    <name type="primary">N5</name>
</gene>
<keyword id="KW-0040">ANK repeat</keyword>
<keyword id="KW-0945">Host-virus interaction</keyword>
<keyword id="KW-1100">Inhibition of host NF-kappa-B by virus</keyword>
<keyword id="KW-1185">Reference proteome</keyword>
<keyword id="KW-0677">Repeat</keyword>
<protein>
    <recommendedName>
        <fullName>I-kappa-B like protein N2</fullName>
    </recommendedName>
</protein>
<proteinExistence type="inferred from homology"/>
<dbReference type="EMBL" id="AY875689">
    <property type="protein sequence ID" value="AAW51806.1"/>
    <property type="molecule type" value="Genomic_DNA"/>
</dbReference>
<dbReference type="RefSeq" id="YP_239402.1">
    <property type="nucleotide sequence ID" value="NC_007039.1"/>
</dbReference>
<dbReference type="SMR" id="Q5I126"/>
<dbReference type="KEGG" id="vg:5075836"/>
<dbReference type="Proteomes" id="UP000008168">
    <property type="component" value="Genome"/>
</dbReference>
<dbReference type="GO" id="GO:0051059">
    <property type="term" value="F:NF-kappaB binding"/>
    <property type="evidence" value="ECO:0007669"/>
    <property type="project" value="TreeGrafter"/>
</dbReference>
<dbReference type="GO" id="GO:0071356">
    <property type="term" value="P:cellular response to tumor necrosis factor"/>
    <property type="evidence" value="ECO:0007669"/>
    <property type="project" value="TreeGrafter"/>
</dbReference>
<dbReference type="GO" id="GO:0085034">
    <property type="term" value="P:symbiont-mediated suppression of host NF-kappaB cascade"/>
    <property type="evidence" value="ECO:0007669"/>
    <property type="project" value="UniProtKB-KW"/>
</dbReference>
<dbReference type="Gene3D" id="1.25.40.20">
    <property type="entry name" value="Ankyrin repeat-containing domain"/>
    <property type="match status" value="1"/>
</dbReference>
<dbReference type="InterPro" id="IPR002110">
    <property type="entry name" value="Ankyrin_rpt"/>
</dbReference>
<dbReference type="InterPro" id="IPR036770">
    <property type="entry name" value="Ankyrin_rpt-contain_sf"/>
</dbReference>
<dbReference type="InterPro" id="IPR051070">
    <property type="entry name" value="NF-kappa-B_inhibitor"/>
</dbReference>
<dbReference type="PANTHER" id="PTHR46680">
    <property type="entry name" value="NF-KAPPA-B INHIBITOR ALPHA"/>
    <property type="match status" value="1"/>
</dbReference>
<dbReference type="PANTHER" id="PTHR46680:SF3">
    <property type="entry name" value="NF-KAPPA-B INHIBITOR CACTUS"/>
    <property type="match status" value="1"/>
</dbReference>
<dbReference type="Pfam" id="PF00023">
    <property type="entry name" value="Ank"/>
    <property type="match status" value="1"/>
</dbReference>
<dbReference type="SMART" id="SM00248">
    <property type="entry name" value="ANK"/>
    <property type="match status" value="3"/>
</dbReference>
<dbReference type="SUPFAM" id="SSF48403">
    <property type="entry name" value="Ankyrin repeat"/>
    <property type="match status" value="1"/>
</dbReference>
<dbReference type="PROSITE" id="PS50297">
    <property type="entry name" value="ANK_REP_REGION"/>
    <property type="match status" value="1"/>
</dbReference>
<dbReference type="PROSITE" id="PS50088">
    <property type="entry name" value="ANK_REPEAT"/>
    <property type="match status" value="1"/>
</dbReference>
<evidence type="ECO:0000256" key="1">
    <source>
        <dbReference type="SAM" id="MobiDB-lite"/>
    </source>
</evidence>
<evidence type="ECO:0000269" key="2">
    <source>
    </source>
</evidence>
<evidence type="ECO:0000305" key="3"/>
<comment type="function">
    <text evidence="2">Suppresses the host immune response through NF-kappa-B inactivation. Possesses ankyrin repeat domains required for NF-kappa-B binding but lacks the regulatory regions required for dissociation from NF-kappa-B and degradation. Therefore, prevents host NF-kappa-B release and subsequent activation.</text>
</comment>
<comment type="similarity">
    <text evidence="3">Belongs to the polydnaviridae I-Kappa-B like protein family.</text>
</comment>
<name>IKBN2_MDBVW</name>
<organismHost>
    <name type="scientific">Microplitis demolitor</name>
    <name type="common">Parasitoid wasp</name>
    <dbReference type="NCBI Taxonomy" id="69319"/>
</organismHost>
<accession>Q5I126</accession>
<organism>
    <name type="scientific">Microplitis demolitor bracovirus (isolate Webb)</name>
    <name type="common">MdBV</name>
    <dbReference type="NCBI Taxonomy" id="654919"/>
    <lineage>
        <taxon>Viruses</taxon>
        <taxon>Viruses incertae sedis</taxon>
        <taxon>Polydnaviriformidae</taxon>
        <taxon>Bracoviriform</taxon>
        <taxon>Microplitis demolitor bracovirus</taxon>
    </lineage>
</organism>
<reference key="1">
    <citation type="journal article" date="2006" name="Virology">
        <title>Polydnavirus genomes reflect their dual roles as mutualists and pathogens.</title>
        <authorList>
            <person name="Webb B.A."/>
            <person name="Strand M.R."/>
            <person name="Dickey S.E."/>
            <person name="Beck M.H."/>
            <person name="Hilgarth R.S."/>
            <person name="Barney W.E."/>
            <person name="Kadash K."/>
            <person name="Kroemer J.A."/>
            <person name="Lindstrom K.G."/>
            <person name="Rattanadechakul W."/>
            <person name="Shelby K.S."/>
            <person name="Thoetkiattikul H."/>
            <person name="Turnbull M.W."/>
            <person name="Witherell R.A."/>
        </authorList>
    </citation>
    <scope>NUCLEOTIDE SEQUENCE [GENOMIC DNA]</scope>
</reference>
<reference key="2">
    <citation type="journal article" date="2005" name="Proc. Natl. Acad. Sci. U.S.A.">
        <title>Inhibitor kappaB-like proteins from a polydnavirus inhibit NF-kappaB activation and suppress the insect immune response.</title>
        <authorList>
            <person name="Thoetkiattikul H."/>
            <person name="Beck M.H."/>
            <person name="Strand M.R."/>
        </authorList>
    </citation>
    <scope>FUNCTION</scope>
</reference>
<feature type="chain" id="PRO_0000405369" description="I-kappa-B like protein N2">
    <location>
        <begin position="1"/>
        <end position="183"/>
    </location>
</feature>
<feature type="repeat" description="ANK 1">
    <location>
        <begin position="62"/>
        <end position="95"/>
    </location>
</feature>
<feature type="repeat" description="ANK 2">
    <location>
        <begin position="99"/>
        <end position="129"/>
    </location>
</feature>
<feature type="region of interest" description="Disordered" evidence="1">
    <location>
        <begin position="163"/>
        <end position="183"/>
    </location>
</feature>
<sequence>MDSSDKSNLPLLLEIDWERHEAYTGENIFHVIAKKGWLKMLCALEGLVDEKIKPWLRKWSRDGNTCLHEAALRNKGPQAIRIMEKLIEYGADLNLKSSCHKPVLHVAVERNDYELVAWICQQPGINLEAEDFYKFTAHQLASKKNLNNDKKMVKILETYGAIPRQDGSSEDEVSDSEEKSDSE</sequence>